<name>RASH_RRASV</name>
<comment type="catalytic activity">
    <reaction evidence="1">
        <text>GTP + H2O = GDP + phosphate + H(+)</text>
        <dbReference type="Rhea" id="RHEA:19669"/>
        <dbReference type="ChEBI" id="CHEBI:15377"/>
        <dbReference type="ChEBI" id="CHEBI:15378"/>
        <dbReference type="ChEBI" id="CHEBI:37565"/>
        <dbReference type="ChEBI" id="CHEBI:43474"/>
        <dbReference type="ChEBI" id="CHEBI:58189"/>
        <dbReference type="EC" id="3.6.5.2"/>
    </reaction>
</comment>
<comment type="activity regulation">
    <text>Alternates between an inactive form bound to GDP and an active form bound to GTP. Activated by a guanine nucleotide-exchange factor (GEF) and inactivated by a GTPase-activating protein (GAP).</text>
</comment>
<comment type="subcellular location">
    <subcellularLocation>
        <location evidence="4">Host cell membrane</location>
        <topology evidence="4">Lipid-anchor</topology>
        <orientation evidence="4">Cytoplasmic side</orientation>
    </subcellularLocation>
</comment>
<comment type="miscellaneous">
    <text>This p21 transforming protein was generated by a transduction of rodent cellular H-ras-1 gene.</text>
</comment>
<comment type="similarity">
    <text evidence="4">Belongs to the small GTPase superfamily. Ras family.</text>
</comment>
<gene>
    <name type="primary">RAS</name>
</gene>
<dbReference type="EC" id="3.6.5.2" evidence="1"/>
<dbReference type="EMBL" id="J02294">
    <property type="protein sequence ID" value="AAA47420.1"/>
    <property type="molecule type" value="Genomic_RNA"/>
</dbReference>
<dbReference type="PIR" id="A01362">
    <property type="entry name" value="TVMVRS"/>
</dbReference>
<dbReference type="BMRB" id="P01114"/>
<dbReference type="SMR" id="P01114"/>
<dbReference type="GO" id="GO:0020002">
    <property type="term" value="C:host cell plasma membrane"/>
    <property type="evidence" value="ECO:0007669"/>
    <property type="project" value="UniProtKB-SubCell"/>
</dbReference>
<dbReference type="GO" id="GO:0016020">
    <property type="term" value="C:membrane"/>
    <property type="evidence" value="ECO:0007669"/>
    <property type="project" value="UniProtKB-KW"/>
</dbReference>
<dbReference type="GO" id="GO:0003925">
    <property type="term" value="F:G protein activity"/>
    <property type="evidence" value="ECO:0007669"/>
    <property type="project" value="UniProtKB-EC"/>
</dbReference>
<dbReference type="GO" id="GO:0005525">
    <property type="term" value="F:GTP binding"/>
    <property type="evidence" value="ECO:0007669"/>
    <property type="project" value="UniProtKB-KW"/>
</dbReference>
<dbReference type="GO" id="GO:0007165">
    <property type="term" value="P:signal transduction"/>
    <property type="evidence" value="ECO:0007669"/>
    <property type="project" value="InterPro"/>
</dbReference>
<dbReference type="CDD" id="cd04138">
    <property type="entry name" value="H_N_K_Ras_like"/>
    <property type="match status" value="1"/>
</dbReference>
<dbReference type="FunFam" id="3.40.50.300:FF:000096">
    <property type="entry name" value="KRAS proto-oncogene, GTPase"/>
    <property type="match status" value="1"/>
</dbReference>
<dbReference type="Gene3D" id="1.10.150.180">
    <property type="entry name" value="Gamma-retroviral matrix domain"/>
    <property type="match status" value="1"/>
</dbReference>
<dbReference type="Gene3D" id="3.40.50.300">
    <property type="entry name" value="P-loop containing nucleotide triphosphate hydrolases"/>
    <property type="match status" value="1"/>
</dbReference>
<dbReference type="InterPro" id="IPR000840">
    <property type="entry name" value="G_retro_matrix"/>
</dbReference>
<dbReference type="InterPro" id="IPR036946">
    <property type="entry name" value="G_retro_matrix_sf"/>
</dbReference>
<dbReference type="InterPro" id="IPR027417">
    <property type="entry name" value="P-loop_NTPase"/>
</dbReference>
<dbReference type="InterPro" id="IPR010999">
    <property type="entry name" value="Retrovr_matrix"/>
</dbReference>
<dbReference type="InterPro" id="IPR005225">
    <property type="entry name" value="Small_GTP-bd"/>
</dbReference>
<dbReference type="InterPro" id="IPR001806">
    <property type="entry name" value="Small_GTPase"/>
</dbReference>
<dbReference type="InterPro" id="IPR020849">
    <property type="entry name" value="Small_GTPase_Ras-type"/>
</dbReference>
<dbReference type="NCBIfam" id="TIGR00231">
    <property type="entry name" value="small_GTP"/>
    <property type="match status" value="1"/>
</dbReference>
<dbReference type="PANTHER" id="PTHR24070">
    <property type="entry name" value="RAS, DI-RAS, AND RHEB FAMILY MEMBERS OF SMALL GTPASE SUPERFAMILY"/>
    <property type="match status" value="1"/>
</dbReference>
<dbReference type="Pfam" id="PF01140">
    <property type="entry name" value="Gag_MA"/>
    <property type="match status" value="1"/>
</dbReference>
<dbReference type="Pfam" id="PF00071">
    <property type="entry name" value="Ras"/>
    <property type="match status" value="1"/>
</dbReference>
<dbReference type="PRINTS" id="PR00449">
    <property type="entry name" value="RASTRNSFRMNG"/>
</dbReference>
<dbReference type="SMART" id="SM00175">
    <property type="entry name" value="RAB"/>
    <property type="match status" value="1"/>
</dbReference>
<dbReference type="SMART" id="SM00173">
    <property type="entry name" value="RAS"/>
    <property type="match status" value="1"/>
</dbReference>
<dbReference type="SMART" id="SM00174">
    <property type="entry name" value="RHO"/>
    <property type="match status" value="1"/>
</dbReference>
<dbReference type="SUPFAM" id="SSF52540">
    <property type="entry name" value="P-loop containing nucleoside triphosphate hydrolases"/>
    <property type="match status" value="1"/>
</dbReference>
<dbReference type="SUPFAM" id="SSF47836">
    <property type="entry name" value="Retroviral matrix proteins"/>
    <property type="match status" value="1"/>
</dbReference>
<dbReference type="PROSITE" id="PS51421">
    <property type="entry name" value="RAS"/>
    <property type="match status" value="1"/>
</dbReference>
<evidence type="ECO:0000250" key="1">
    <source>
        <dbReference type="UniProtKB" id="P01112"/>
    </source>
</evidence>
<evidence type="ECO:0000255" key="2"/>
<evidence type="ECO:0000256" key="3">
    <source>
        <dbReference type="SAM" id="MobiDB-lite"/>
    </source>
</evidence>
<evidence type="ECO:0000305" key="4"/>
<proteinExistence type="inferred from homology"/>
<feature type="chain" id="PRO_0000030186" description="Transforming protein p29">
    <location>
        <begin position="1"/>
        <end position="245"/>
    </location>
</feature>
<feature type="chain" id="PRO_0000030187" description="Transforming protein p21">
    <location>
        <begin position="59"/>
        <end position="245"/>
    </location>
</feature>
<feature type="propeptide" id="PRO_0000030188" description="Removed in mature form" evidence="4">
    <location>
        <begin position="246"/>
        <end position="248"/>
    </location>
</feature>
<feature type="region of interest" description="Disordered" evidence="3">
    <location>
        <begin position="28"/>
        <end position="48"/>
    </location>
</feature>
<feature type="modified residue" description="Cysteine methyl ester; by host" evidence="4">
    <location>
        <position position="245"/>
    </location>
</feature>
<feature type="lipid moiety-binding region" description="S-palmitoyl cysteine; by host" evidence="2">
    <location>
        <position position="240"/>
    </location>
</feature>
<feature type="lipid moiety-binding region" description="S-palmitoyl cysteine; by host" evidence="2">
    <location>
        <position position="243"/>
    </location>
</feature>
<feature type="lipid moiety-binding region" description="S-farnesyl cysteine; by host" evidence="2">
    <location>
        <position position="245"/>
    </location>
</feature>
<organism>
    <name type="scientific">Rasheed rat sarcoma virus</name>
    <dbReference type="NCBI Taxonomy" id="11816"/>
    <lineage>
        <taxon>Viruses</taxon>
        <taxon>Riboviria</taxon>
        <taxon>Pararnavirae</taxon>
        <taxon>Artverviricota</taxon>
        <taxon>Revtraviricetes</taxon>
        <taxon>Ortervirales</taxon>
        <taxon>Retroviridae</taxon>
        <taxon>Orthoretrovirinae</taxon>
        <taxon>Gammaretrovirus</taxon>
        <taxon>Murine leukemia virus</taxon>
    </lineage>
</organism>
<reference key="1">
    <citation type="journal article" date="1983" name="Science">
        <title>Nucleotide sequence of the Rasheed rat sarcoma virus oncogene: new mutations.</title>
        <authorList>
            <person name="Rasheed S."/>
            <person name="Norman G.L."/>
            <person name="Heidecker G."/>
        </authorList>
    </citation>
    <scope>NUCLEOTIDE SEQUENCE [GENOMIC RNA]</scope>
</reference>
<reference key="2">
    <citation type="journal article" date="1987" name="Annu. Rev. Biochem.">
        <title>Ras genes.</title>
        <authorList>
            <person name="Barbacid M."/>
        </authorList>
    </citation>
    <scope>REVIEW</scope>
</reference>
<protein>
    <recommendedName>
        <fullName>Transforming protein p29</fullName>
        <ecNumber evidence="1">3.6.5.2</ecNumber>
    </recommendedName>
    <component>
        <recommendedName>
            <fullName>Transforming protein p21</fullName>
        </recommendedName>
    </component>
</protein>
<accession>P01114</accession>
<organismHost>
    <name type="scientific">Rattus norvegicus</name>
    <name type="common">Rat</name>
    <dbReference type="NCBI Taxonomy" id="10116"/>
</organismHost>
<keyword id="KW-0342">GTP-binding</keyword>
<keyword id="KW-1032">Host cell membrane</keyword>
<keyword id="KW-1043">Host membrane</keyword>
<keyword id="KW-0378">Hydrolase</keyword>
<keyword id="KW-0449">Lipoprotein</keyword>
<keyword id="KW-0472">Membrane</keyword>
<keyword id="KW-0488">Methylation</keyword>
<keyword id="KW-0547">Nucleotide-binding</keyword>
<keyword id="KW-0553">Oncogene</keyword>
<keyword id="KW-0564">Palmitate</keyword>
<keyword id="KW-0636">Prenylation</keyword>
<sequence length="248" mass="27424">MGQSLTTPLSLTLDHWKDVRDRARDQSVEIKKGPLRRSGTVAPASGGAGAPGLAAPVEAMTEYKLVVVGARGVGKSALTIQLIQNHFVDEYDPTIEDSYRKQVVIDGETCLLDILDTAGQEEYSAMRDQYMRTGEGFLCVFAINNTKSFEDIHQYREQIKRVKDSDDVPMVLVGNKCDLAAHTVESRQAQDLARSYGIPYIETSAKTRPGVEDAFYTLVREIRQHKLRKLNPPDESGPGCMSCKCVLS</sequence>